<geneLocation type="chloroplast"/>
<dbReference type="EC" id="7.1.1.-" evidence="1"/>
<dbReference type="EMBL" id="DQ317523">
    <property type="protein sequence ID" value="ABC25166.1"/>
    <property type="molecule type" value="Genomic_DNA"/>
</dbReference>
<dbReference type="SMR" id="P0CC63"/>
<dbReference type="FunCoup" id="P0CC63">
    <property type="interactions" value="34"/>
</dbReference>
<dbReference type="STRING" id="3847.P0CC63"/>
<dbReference type="KEGG" id="gmx:3989342"/>
<dbReference type="KEGG" id="gmx:3989377"/>
<dbReference type="InParanoid" id="P0CC63"/>
<dbReference type="Proteomes" id="UP000008827">
    <property type="component" value="Chloroplast"/>
</dbReference>
<dbReference type="GO" id="GO:0009535">
    <property type="term" value="C:chloroplast thylakoid membrane"/>
    <property type="evidence" value="ECO:0007669"/>
    <property type="project" value="UniProtKB-SubCell"/>
</dbReference>
<dbReference type="GO" id="GO:0008137">
    <property type="term" value="F:NADH dehydrogenase (ubiquinone) activity"/>
    <property type="evidence" value="ECO:0007669"/>
    <property type="project" value="InterPro"/>
</dbReference>
<dbReference type="GO" id="GO:0048038">
    <property type="term" value="F:quinone binding"/>
    <property type="evidence" value="ECO:0007669"/>
    <property type="project" value="UniProtKB-KW"/>
</dbReference>
<dbReference type="GO" id="GO:0042773">
    <property type="term" value="P:ATP synthesis coupled electron transport"/>
    <property type="evidence" value="ECO:0007669"/>
    <property type="project" value="InterPro"/>
</dbReference>
<dbReference type="GO" id="GO:0019684">
    <property type="term" value="P:photosynthesis, light reaction"/>
    <property type="evidence" value="ECO:0007669"/>
    <property type="project" value="UniProtKB-UniRule"/>
</dbReference>
<dbReference type="HAMAP" id="MF_00445">
    <property type="entry name" value="NDH1_NuoN_1"/>
    <property type="match status" value="1"/>
</dbReference>
<dbReference type="InterPro" id="IPR010096">
    <property type="entry name" value="NADH-Q_OxRdtase_suN/2"/>
</dbReference>
<dbReference type="InterPro" id="IPR001750">
    <property type="entry name" value="ND/Mrp_TM"/>
</dbReference>
<dbReference type="InterPro" id="IPR045693">
    <property type="entry name" value="Ndh2_N"/>
</dbReference>
<dbReference type="NCBIfam" id="TIGR01770">
    <property type="entry name" value="NDH_I_N"/>
    <property type="match status" value="1"/>
</dbReference>
<dbReference type="NCBIfam" id="NF002701">
    <property type="entry name" value="PRK02504.1"/>
    <property type="match status" value="1"/>
</dbReference>
<dbReference type="PANTHER" id="PTHR22773">
    <property type="entry name" value="NADH DEHYDROGENASE"/>
    <property type="match status" value="1"/>
</dbReference>
<dbReference type="Pfam" id="PF19530">
    <property type="entry name" value="Ndh2_N"/>
    <property type="match status" value="1"/>
</dbReference>
<dbReference type="Pfam" id="PF00361">
    <property type="entry name" value="Proton_antipo_M"/>
    <property type="match status" value="1"/>
</dbReference>
<dbReference type="PRINTS" id="PR01434">
    <property type="entry name" value="NADHDHGNASE5"/>
</dbReference>
<name>NU2C2_SOYBN</name>
<accession>P0CC63</accession>
<accession>P10328</accession>
<accession>Q2PMM6</accession>
<sequence length="510" mass="56691">MIWHVQNENFILDSTRIFMKAFHLPLFDGSFIFPECILIFGLILLLMIDSTSDQKDISWFYFISSTSLVMSITALLFRWREEPMISFSGNFQTNNFNEIFQFLILLCSTLCIPLSVEYIECTEMAITEFLLFILTATLGGMFLCGANDLITIFVALECFSLCSYLLSGYTKKDVRSNEATTKYLLMGGASSSILVHGFSWLYGSSGGEIELQEIVNGLINTQMYNSPGILIALLFITVGIGFKLSPAPSHQWTPDVYEGSPTPVVAFLSVTSKVAASASATRIFDIPFYFSSNEWHLLLEILAILSMILGNLIAITQTSMKRMLAYSSIGQIGYVIIGIIVGDSNGGYASMITYMLFYISMNLGTFACIVSFGLRTGTDNIRDYAGLYTKDPYLALSLALCLLSLGGLPPLSGFFGKLHLFWCGWQAGLYFLVSIGLLTSVVSIYYYLKIIKLLMTGRNQEITPHVRNYRRPPLRSNNSIELSMIVCVIASTIPGISMNPIIEIAQDTLF</sequence>
<reference key="1">
    <citation type="journal article" date="2005" name="Plant Mol. Biol.">
        <title>Complete chloroplast genome sequence of Glycine max and comparative analyses with other legume genomes.</title>
        <authorList>
            <person name="Saski C."/>
            <person name="Lee S.-B."/>
            <person name="Daniell H."/>
            <person name="Wood T.C."/>
            <person name="Tomkins J."/>
            <person name="Kim H.-G."/>
            <person name="Jansen R.K."/>
        </authorList>
    </citation>
    <scope>NUCLEOTIDE SEQUENCE [LARGE SCALE GENOMIC DNA]</scope>
    <source>
        <strain>cv. PI 437654</strain>
    </source>
</reference>
<organism>
    <name type="scientific">Glycine max</name>
    <name type="common">Soybean</name>
    <name type="synonym">Glycine hispida</name>
    <dbReference type="NCBI Taxonomy" id="3847"/>
    <lineage>
        <taxon>Eukaryota</taxon>
        <taxon>Viridiplantae</taxon>
        <taxon>Streptophyta</taxon>
        <taxon>Embryophyta</taxon>
        <taxon>Tracheophyta</taxon>
        <taxon>Spermatophyta</taxon>
        <taxon>Magnoliopsida</taxon>
        <taxon>eudicotyledons</taxon>
        <taxon>Gunneridae</taxon>
        <taxon>Pentapetalae</taxon>
        <taxon>rosids</taxon>
        <taxon>fabids</taxon>
        <taxon>Fabales</taxon>
        <taxon>Fabaceae</taxon>
        <taxon>Papilionoideae</taxon>
        <taxon>50 kb inversion clade</taxon>
        <taxon>NPAAA clade</taxon>
        <taxon>indigoferoid/millettioid clade</taxon>
        <taxon>Phaseoleae</taxon>
        <taxon>Glycine</taxon>
        <taxon>Glycine subgen. Soja</taxon>
    </lineage>
</organism>
<evidence type="ECO:0000255" key="1">
    <source>
        <dbReference type="HAMAP-Rule" id="MF_00445"/>
    </source>
</evidence>
<comment type="function">
    <text evidence="1">NDH shuttles electrons from NAD(P)H:plastoquinone, via FMN and iron-sulfur (Fe-S) centers, to quinones in the photosynthetic chain and possibly in a chloroplast respiratory chain. The immediate electron acceptor for the enzyme in this species is believed to be plastoquinone. Couples the redox reaction to proton translocation, and thus conserves the redox energy in a proton gradient.</text>
</comment>
<comment type="catalytic activity">
    <reaction evidence="1">
        <text>a plastoquinone + NADH + (n+1) H(+)(in) = a plastoquinol + NAD(+) + n H(+)(out)</text>
        <dbReference type="Rhea" id="RHEA:42608"/>
        <dbReference type="Rhea" id="RHEA-COMP:9561"/>
        <dbReference type="Rhea" id="RHEA-COMP:9562"/>
        <dbReference type="ChEBI" id="CHEBI:15378"/>
        <dbReference type="ChEBI" id="CHEBI:17757"/>
        <dbReference type="ChEBI" id="CHEBI:57540"/>
        <dbReference type="ChEBI" id="CHEBI:57945"/>
        <dbReference type="ChEBI" id="CHEBI:62192"/>
    </reaction>
</comment>
<comment type="catalytic activity">
    <reaction evidence="1">
        <text>a plastoquinone + NADPH + (n+1) H(+)(in) = a plastoquinol + NADP(+) + n H(+)(out)</text>
        <dbReference type="Rhea" id="RHEA:42612"/>
        <dbReference type="Rhea" id="RHEA-COMP:9561"/>
        <dbReference type="Rhea" id="RHEA-COMP:9562"/>
        <dbReference type="ChEBI" id="CHEBI:15378"/>
        <dbReference type="ChEBI" id="CHEBI:17757"/>
        <dbReference type="ChEBI" id="CHEBI:57783"/>
        <dbReference type="ChEBI" id="CHEBI:58349"/>
        <dbReference type="ChEBI" id="CHEBI:62192"/>
    </reaction>
</comment>
<comment type="subunit">
    <text evidence="1">NDH is composed of at least 16 different subunits, 5 of which are encoded in the nucleus.</text>
</comment>
<comment type="subcellular location">
    <subcellularLocation>
        <location evidence="1">Plastid</location>
        <location evidence="1">Chloroplast thylakoid membrane</location>
        <topology evidence="1">Multi-pass membrane protein</topology>
    </subcellularLocation>
</comment>
<comment type="similarity">
    <text evidence="1">Belongs to the complex I subunit 2 family.</text>
</comment>
<protein>
    <recommendedName>
        <fullName evidence="1">NAD(P)H-quinone oxidoreductase subunit 2 B, chloroplastic</fullName>
        <ecNumber evidence="1">7.1.1.-</ecNumber>
    </recommendedName>
    <alternativeName>
        <fullName evidence="1">NAD(P)H dehydrogenase, subunit 2 B</fullName>
    </alternativeName>
    <alternativeName>
        <fullName evidence="1">NADH-plastoquinone oxidoreductase subunit 2 B</fullName>
    </alternativeName>
</protein>
<keyword id="KW-0150">Chloroplast</keyword>
<keyword id="KW-0472">Membrane</keyword>
<keyword id="KW-0520">NAD</keyword>
<keyword id="KW-0521">NADP</keyword>
<keyword id="KW-0934">Plastid</keyword>
<keyword id="KW-0618">Plastoquinone</keyword>
<keyword id="KW-0874">Quinone</keyword>
<keyword id="KW-1185">Reference proteome</keyword>
<keyword id="KW-0793">Thylakoid</keyword>
<keyword id="KW-1278">Translocase</keyword>
<keyword id="KW-0812">Transmembrane</keyword>
<keyword id="KW-1133">Transmembrane helix</keyword>
<keyword id="KW-0813">Transport</keyword>
<feature type="chain" id="PRO_0000391269" description="NAD(P)H-quinone oxidoreductase subunit 2 B, chloroplastic">
    <location>
        <begin position="1"/>
        <end position="510"/>
    </location>
</feature>
<feature type="transmembrane region" description="Helical" evidence="1">
    <location>
        <begin position="26"/>
        <end position="46"/>
    </location>
</feature>
<feature type="transmembrane region" description="Helical" evidence="1">
    <location>
        <begin position="57"/>
        <end position="77"/>
    </location>
</feature>
<feature type="transmembrane region" description="Helical" evidence="1">
    <location>
        <begin position="99"/>
        <end position="119"/>
    </location>
</feature>
<feature type="transmembrane region" description="Helical" evidence="1">
    <location>
        <begin position="124"/>
        <end position="144"/>
    </location>
</feature>
<feature type="transmembrane region" description="Helical" evidence="1">
    <location>
        <begin position="149"/>
        <end position="169"/>
    </location>
</feature>
<feature type="transmembrane region" description="Helical" evidence="1">
    <location>
        <begin position="183"/>
        <end position="203"/>
    </location>
</feature>
<feature type="transmembrane region" description="Helical" evidence="1">
    <location>
        <begin position="227"/>
        <end position="247"/>
    </location>
</feature>
<feature type="transmembrane region" description="Helical" evidence="1">
    <location>
        <begin position="295"/>
        <end position="315"/>
    </location>
</feature>
<feature type="transmembrane region" description="Helical" evidence="1">
    <location>
        <begin position="323"/>
        <end position="343"/>
    </location>
</feature>
<feature type="transmembrane region" description="Helical" evidence="1">
    <location>
        <begin position="354"/>
        <end position="374"/>
    </location>
</feature>
<feature type="transmembrane region" description="Helical" evidence="1">
    <location>
        <begin position="395"/>
        <end position="415"/>
    </location>
</feature>
<feature type="transmembrane region" description="Helical" evidence="1">
    <location>
        <begin position="418"/>
        <end position="438"/>
    </location>
</feature>
<feature type="transmembrane region" description="Helical" evidence="1">
    <location>
        <begin position="482"/>
        <end position="502"/>
    </location>
</feature>
<proteinExistence type="inferred from homology"/>
<gene>
    <name evidence="1" type="primary">ndhB2</name>
</gene>